<sequence>MAQVFNFSSGPAMLPAEVLKLAQQELRDWHGLGTSVMEISHRGKEFIQVAEEAEQDFRDLLNIPSNYKVLFCHGGGRGQFAGVPLNLLGDKTTADYVDAGYWAASAIKEAKKYCAPQIIDAKITVDGKRAVKPMREWQLSDNAAYLHYCPNETIDGIAIDETPDFGPEVVVTADFSSTILSAPLDVSRYGVIYAGAQKNIGPAGLTLVIVREDLLGKAHESCPSILDYTVLNDNDSMFNTPPTFAWYLSGLVFKWLKAQGGVAAMHKINQQKAELLYGVIDNSDFYRNDVAQANRSRMNVPFQLADNTLDKVFLEESFAAGLHALKGHRVVGGMRASIYNAMPIEGVKALTDFMIDFERRHG</sequence>
<comment type="function">
    <text evidence="1">Catalyzes the reversible conversion of 3-phosphohydroxypyruvate to phosphoserine and of 3-hydroxy-2-oxo-4-phosphonooxybutanoate to phosphohydroxythreonine.</text>
</comment>
<comment type="catalytic activity">
    <reaction evidence="1">
        <text>O-phospho-L-serine + 2-oxoglutarate = 3-phosphooxypyruvate + L-glutamate</text>
        <dbReference type="Rhea" id="RHEA:14329"/>
        <dbReference type="ChEBI" id="CHEBI:16810"/>
        <dbReference type="ChEBI" id="CHEBI:18110"/>
        <dbReference type="ChEBI" id="CHEBI:29985"/>
        <dbReference type="ChEBI" id="CHEBI:57524"/>
        <dbReference type="EC" id="2.6.1.52"/>
    </reaction>
</comment>
<comment type="catalytic activity">
    <reaction evidence="1">
        <text>4-(phosphooxy)-L-threonine + 2-oxoglutarate = (R)-3-hydroxy-2-oxo-4-phosphooxybutanoate + L-glutamate</text>
        <dbReference type="Rhea" id="RHEA:16573"/>
        <dbReference type="ChEBI" id="CHEBI:16810"/>
        <dbReference type="ChEBI" id="CHEBI:29985"/>
        <dbReference type="ChEBI" id="CHEBI:58452"/>
        <dbReference type="ChEBI" id="CHEBI:58538"/>
        <dbReference type="EC" id="2.6.1.52"/>
    </reaction>
</comment>
<comment type="cofactor">
    <cofactor evidence="1">
        <name>pyridoxal 5'-phosphate</name>
        <dbReference type="ChEBI" id="CHEBI:597326"/>
    </cofactor>
    <text evidence="1">Binds 1 pyridoxal phosphate per subunit.</text>
</comment>
<comment type="pathway">
    <text evidence="1">Amino-acid biosynthesis; L-serine biosynthesis; L-serine from 3-phospho-D-glycerate: step 2/3.</text>
</comment>
<comment type="pathway">
    <text evidence="1">Cofactor biosynthesis; pyridoxine 5'-phosphate biosynthesis; pyridoxine 5'-phosphate from D-erythrose 4-phosphate: step 3/5.</text>
</comment>
<comment type="subunit">
    <text evidence="1">Homodimer.</text>
</comment>
<comment type="subcellular location">
    <subcellularLocation>
        <location evidence="1">Cytoplasm</location>
    </subcellularLocation>
</comment>
<comment type="similarity">
    <text evidence="1">Belongs to the class-V pyridoxal-phosphate-dependent aminotransferase family. SerC subfamily.</text>
</comment>
<feature type="chain" id="PRO_0000150204" description="Phosphoserine aminotransferase">
    <location>
        <begin position="1"/>
        <end position="362"/>
    </location>
</feature>
<feature type="binding site" evidence="1">
    <location>
        <position position="9"/>
    </location>
    <ligand>
        <name>L-glutamate</name>
        <dbReference type="ChEBI" id="CHEBI:29985"/>
    </ligand>
</feature>
<feature type="binding site" evidence="1">
    <location>
        <position position="42"/>
    </location>
    <ligand>
        <name>L-glutamate</name>
        <dbReference type="ChEBI" id="CHEBI:29985"/>
    </ligand>
</feature>
<feature type="binding site" evidence="1">
    <location>
        <begin position="76"/>
        <end position="77"/>
    </location>
    <ligand>
        <name>pyridoxal 5'-phosphate</name>
        <dbReference type="ChEBI" id="CHEBI:597326"/>
    </ligand>
</feature>
<feature type="binding site" evidence="1">
    <location>
        <position position="102"/>
    </location>
    <ligand>
        <name>pyridoxal 5'-phosphate</name>
        <dbReference type="ChEBI" id="CHEBI:597326"/>
    </ligand>
</feature>
<feature type="binding site" evidence="1">
    <location>
        <position position="153"/>
    </location>
    <ligand>
        <name>pyridoxal 5'-phosphate</name>
        <dbReference type="ChEBI" id="CHEBI:597326"/>
    </ligand>
</feature>
<feature type="binding site" evidence="1">
    <location>
        <position position="174"/>
    </location>
    <ligand>
        <name>pyridoxal 5'-phosphate</name>
        <dbReference type="ChEBI" id="CHEBI:597326"/>
    </ligand>
</feature>
<feature type="binding site" evidence="1">
    <location>
        <position position="197"/>
    </location>
    <ligand>
        <name>pyridoxal 5'-phosphate</name>
        <dbReference type="ChEBI" id="CHEBI:597326"/>
    </ligand>
</feature>
<feature type="binding site" evidence="1">
    <location>
        <begin position="239"/>
        <end position="240"/>
    </location>
    <ligand>
        <name>pyridoxal 5'-phosphate</name>
        <dbReference type="ChEBI" id="CHEBI:597326"/>
    </ligand>
</feature>
<feature type="modified residue" description="N6-(pyridoxal phosphate)lysine" evidence="1">
    <location>
        <position position="198"/>
    </location>
</feature>
<reference key="1">
    <citation type="journal article" date="2005" name="Nucleic Acids Res.">
        <title>The genome sequence of Salmonella enterica serovar Choleraesuis, a highly invasive and resistant zoonotic pathogen.</title>
        <authorList>
            <person name="Chiu C.-H."/>
            <person name="Tang P."/>
            <person name="Chu C."/>
            <person name="Hu S."/>
            <person name="Bao Q."/>
            <person name="Yu J."/>
            <person name="Chou Y.-Y."/>
            <person name="Wang H.-S."/>
            <person name="Lee Y.-S."/>
        </authorList>
    </citation>
    <scope>NUCLEOTIDE SEQUENCE [LARGE SCALE GENOMIC DNA]</scope>
    <source>
        <strain>SC-B67</strain>
    </source>
</reference>
<accession>Q57R24</accession>
<gene>
    <name evidence="1" type="primary">serC</name>
    <name type="ordered locus">SCH_0931</name>
</gene>
<name>SERC_SALCH</name>
<protein>
    <recommendedName>
        <fullName evidence="1">Phosphoserine aminotransferase</fullName>
        <ecNumber evidence="1">2.6.1.52</ecNumber>
    </recommendedName>
    <alternativeName>
        <fullName evidence="1">Phosphohydroxythreonine aminotransferase</fullName>
        <shortName evidence="1">PSAT</shortName>
    </alternativeName>
</protein>
<evidence type="ECO:0000255" key="1">
    <source>
        <dbReference type="HAMAP-Rule" id="MF_00160"/>
    </source>
</evidence>
<proteinExistence type="inferred from homology"/>
<organism>
    <name type="scientific">Salmonella choleraesuis (strain SC-B67)</name>
    <dbReference type="NCBI Taxonomy" id="321314"/>
    <lineage>
        <taxon>Bacteria</taxon>
        <taxon>Pseudomonadati</taxon>
        <taxon>Pseudomonadota</taxon>
        <taxon>Gammaproteobacteria</taxon>
        <taxon>Enterobacterales</taxon>
        <taxon>Enterobacteriaceae</taxon>
        <taxon>Salmonella</taxon>
    </lineage>
</organism>
<dbReference type="EC" id="2.6.1.52" evidence="1"/>
<dbReference type="EMBL" id="AE017220">
    <property type="protein sequence ID" value="AAX64837.1"/>
    <property type="molecule type" value="Genomic_DNA"/>
</dbReference>
<dbReference type="RefSeq" id="WP_000079591.1">
    <property type="nucleotide sequence ID" value="NC_006905.1"/>
</dbReference>
<dbReference type="SMR" id="Q57R24"/>
<dbReference type="KEGG" id="sec:SCH_0931"/>
<dbReference type="HOGENOM" id="CLU_034866_0_2_6"/>
<dbReference type="UniPathway" id="UPA00135">
    <property type="reaction ID" value="UER00197"/>
</dbReference>
<dbReference type="UniPathway" id="UPA00244">
    <property type="reaction ID" value="UER00311"/>
</dbReference>
<dbReference type="Proteomes" id="UP000000538">
    <property type="component" value="Chromosome"/>
</dbReference>
<dbReference type="GO" id="GO:0005737">
    <property type="term" value="C:cytoplasm"/>
    <property type="evidence" value="ECO:0007669"/>
    <property type="project" value="UniProtKB-SubCell"/>
</dbReference>
<dbReference type="GO" id="GO:0004648">
    <property type="term" value="F:O-phospho-L-serine:2-oxoglutarate aminotransferase activity"/>
    <property type="evidence" value="ECO:0007669"/>
    <property type="project" value="UniProtKB-UniRule"/>
</dbReference>
<dbReference type="GO" id="GO:0030170">
    <property type="term" value="F:pyridoxal phosphate binding"/>
    <property type="evidence" value="ECO:0007669"/>
    <property type="project" value="UniProtKB-UniRule"/>
</dbReference>
<dbReference type="GO" id="GO:0006564">
    <property type="term" value="P:L-serine biosynthetic process"/>
    <property type="evidence" value="ECO:0007669"/>
    <property type="project" value="UniProtKB-UniRule"/>
</dbReference>
<dbReference type="GO" id="GO:0008615">
    <property type="term" value="P:pyridoxine biosynthetic process"/>
    <property type="evidence" value="ECO:0007669"/>
    <property type="project" value="UniProtKB-UniRule"/>
</dbReference>
<dbReference type="CDD" id="cd00611">
    <property type="entry name" value="PSAT_like"/>
    <property type="match status" value="1"/>
</dbReference>
<dbReference type="FunFam" id="3.40.640.10:FF:000010">
    <property type="entry name" value="Phosphoserine aminotransferase"/>
    <property type="match status" value="1"/>
</dbReference>
<dbReference type="FunFam" id="3.90.1150.10:FF:000006">
    <property type="entry name" value="Phosphoserine aminotransferase"/>
    <property type="match status" value="1"/>
</dbReference>
<dbReference type="Gene3D" id="3.90.1150.10">
    <property type="entry name" value="Aspartate Aminotransferase, domain 1"/>
    <property type="match status" value="1"/>
</dbReference>
<dbReference type="Gene3D" id="3.40.640.10">
    <property type="entry name" value="Type I PLP-dependent aspartate aminotransferase-like (Major domain)"/>
    <property type="match status" value="1"/>
</dbReference>
<dbReference type="HAMAP" id="MF_00160">
    <property type="entry name" value="SerC_aminotrans_5"/>
    <property type="match status" value="1"/>
</dbReference>
<dbReference type="InterPro" id="IPR000192">
    <property type="entry name" value="Aminotrans_V_dom"/>
</dbReference>
<dbReference type="InterPro" id="IPR020578">
    <property type="entry name" value="Aminotrans_V_PyrdxlP_BS"/>
</dbReference>
<dbReference type="InterPro" id="IPR022278">
    <property type="entry name" value="Pser_aminoTfrase"/>
</dbReference>
<dbReference type="InterPro" id="IPR015424">
    <property type="entry name" value="PyrdxlP-dep_Trfase"/>
</dbReference>
<dbReference type="InterPro" id="IPR015421">
    <property type="entry name" value="PyrdxlP-dep_Trfase_major"/>
</dbReference>
<dbReference type="InterPro" id="IPR015422">
    <property type="entry name" value="PyrdxlP-dep_Trfase_small"/>
</dbReference>
<dbReference type="NCBIfam" id="NF003764">
    <property type="entry name" value="PRK05355.1"/>
    <property type="match status" value="1"/>
</dbReference>
<dbReference type="NCBIfam" id="TIGR01364">
    <property type="entry name" value="serC_1"/>
    <property type="match status" value="1"/>
</dbReference>
<dbReference type="PANTHER" id="PTHR43247">
    <property type="entry name" value="PHOSPHOSERINE AMINOTRANSFERASE"/>
    <property type="match status" value="1"/>
</dbReference>
<dbReference type="PANTHER" id="PTHR43247:SF1">
    <property type="entry name" value="PHOSPHOSERINE AMINOTRANSFERASE"/>
    <property type="match status" value="1"/>
</dbReference>
<dbReference type="Pfam" id="PF00266">
    <property type="entry name" value="Aminotran_5"/>
    <property type="match status" value="1"/>
</dbReference>
<dbReference type="PIRSF" id="PIRSF000525">
    <property type="entry name" value="SerC"/>
    <property type="match status" value="1"/>
</dbReference>
<dbReference type="SUPFAM" id="SSF53383">
    <property type="entry name" value="PLP-dependent transferases"/>
    <property type="match status" value="1"/>
</dbReference>
<dbReference type="PROSITE" id="PS00595">
    <property type="entry name" value="AA_TRANSFER_CLASS_5"/>
    <property type="match status" value="1"/>
</dbReference>
<keyword id="KW-0028">Amino-acid biosynthesis</keyword>
<keyword id="KW-0032">Aminotransferase</keyword>
<keyword id="KW-0963">Cytoplasm</keyword>
<keyword id="KW-0663">Pyridoxal phosphate</keyword>
<keyword id="KW-0664">Pyridoxine biosynthesis</keyword>
<keyword id="KW-0718">Serine biosynthesis</keyword>
<keyword id="KW-0808">Transferase</keyword>